<feature type="chain" id="PRO_1000005752" description="Galactokinase">
    <location>
        <begin position="1"/>
        <end position="384"/>
    </location>
</feature>
<feature type="active site" description="Proton acceptor" evidence="1">
    <location>
        <position position="173"/>
    </location>
</feature>
<feature type="binding site" evidence="1">
    <location>
        <begin position="34"/>
        <end position="37"/>
    </location>
    <ligand>
        <name>substrate</name>
    </ligand>
</feature>
<feature type="binding site" evidence="1">
    <location>
        <begin position="123"/>
        <end position="129"/>
    </location>
    <ligand>
        <name>ATP</name>
        <dbReference type="ChEBI" id="CHEBI:30616"/>
    </ligand>
</feature>
<feature type="binding site" evidence="1">
    <location>
        <position position="129"/>
    </location>
    <ligand>
        <name>Mg(2+)</name>
        <dbReference type="ChEBI" id="CHEBI:18420"/>
    </ligand>
</feature>
<feature type="binding site" evidence="1">
    <location>
        <position position="161"/>
    </location>
    <ligand>
        <name>Mg(2+)</name>
        <dbReference type="ChEBI" id="CHEBI:18420"/>
    </ligand>
</feature>
<feature type="binding site" evidence="1">
    <location>
        <position position="222"/>
    </location>
    <ligand>
        <name>substrate</name>
    </ligand>
</feature>
<feature type="site" description="Transition state stabilizer" evidence="1">
    <location>
        <position position="28"/>
    </location>
</feature>
<protein>
    <recommendedName>
        <fullName evidence="1">Galactokinase</fullName>
        <ecNumber evidence="1">2.7.1.6</ecNumber>
    </recommendedName>
    <alternativeName>
        <fullName evidence="1">Galactose kinase</fullName>
    </alternativeName>
</protein>
<keyword id="KW-0067">ATP-binding</keyword>
<keyword id="KW-0119">Carbohydrate metabolism</keyword>
<keyword id="KW-0963">Cytoplasm</keyword>
<keyword id="KW-0299">Galactose metabolism</keyword>
<keyword id="KW-0418">Kinase</keyword>
<keyword id="KW-0460">Magnesium</keyword>
<keyword id="KW-0479">Metal-binding</keyword>
<keyword id="KW-0547">Nucleotide-binding</keyword>
<keyword id="KW-0808">Transferase</keyword>
<comment type="function">
    <text evidence="1">Catalyzes the transfer of the gamma-phosphate of ATP to D-galactose to form alpha-D-galactose-1-phosphate (Gal-1-P).</text>
</comment>
<comment type="catalytic activity">
    <reaction evidence="1">
        <text>alpha-D-galactose + ATP = alpha-D-galactose 1-phosphate + ADP + H(+)</text>
        <dbReference type="Rhea" id="RHEA:13553"/>
        <dbReference type="ChEBI" id="CHEBI:15378"/>
        <dbReference type="ChEBI" id="CHEBI:28061"/>
        <dbReference type="ChEBI" id="CHEBI:30616"/>
        <dbReference type="ChEBI" id="CHEBI:58336"/>
        <dbReference type="ChEBI" id="CHEBI:456216"/>
        <dbReference type="EC" id="2.7.1.6"/>
    </reaction>
</comment>
<comment type="pathway">
    <text evidence="1">Carbohydrate metabolism; galactose metabolism.</text>
</comment>
<comment type="subcellular location">
    <subcellularLocation>
        <location evidence="1">Cytoplasm</location>
    </subcellularLocation>
</comment>
<comment type="similarity">
    <text evidence="1">Belongs to the GHMP kinase family. GalK subfamily.</text>
</comment>
<proteinExistence type="inferred from homology"/>
<dbReference type="EC" id="2.7.1.6" evidence="1"/>
<dbReference type="EMBL" id="CP000671">
    <property type="protein sequence ID" value="ABQ98906.1"/>
    <property type="molecule type" value="Genomic_DNA"/>
</dbReference>
<dbReference type="SMR" id="A5UDQ5"/>
<dbReference type="KEGG" id="hip:CGSHiEE_07965"/>
<dbReference type="HOGENOM" id="CLU_017814_2_1_6"/>
<dbReference type="UniPathway" id="UPA00214"/>
<dbReference type="GO" id="GO:0005829">
    <property type="term" value="C:cytosol"/>
    <property type="evidence" value="ECO:0007669"/>
    <property type="project" value="TreeGrafter"/>
</dbReference>
<dbReference type="GO" id="GO:0005524">
    <property type="term" value="F:ATP binding"/>
    <property type="evidence" value="ECO:0007669"/>
    <property type="project" value="UniProtKB-UniRule"/>
</dbReference>
<dbReference type="GO" id="GO:0004335">
    <property type="term" value="F:galactokinase activity"/>
    <property type="evidence" value="ECO:0007669"/>
    <property type="project" value="UniProtKB-UniRule"/>
</dbReference>
<dbReference type="GO" id="GO:0000287">
    <property type="term" value="F:magnesium ion binding"/>
    <property type="evidence" value="ECO:0007669"/>
    <property type="project" value="UniProtKB-UniRule"/>
</dbReference>
<dbReference type="GO" id="GO:0006012">
    <property type="term" value="P:galactose metabolic process"/>
    <property type="evidence" value="ECO:0007669"/>
    <property type="project" value="UniProtKB-UniRule"/>
</dbReference>
<dbReference type="FunFam" id="3.30.230.10:FF:000017">
    <property type="entry name" value="Galactokinase"/>
    <property type="match status" value="1"/>
</dbReference>
<dbReference type="FunFam" id="3.30.70.890:FF:000001">
    <property type="entry name" value="Galactokinase"/>
    <property type="match status" value="1"/>
</dbReference>
<dbReference type="Gene3D" id="3.30.230.10">
    <property type="match status" value="1"/>
</dbReference>
<dbReference type="Gene3D" id="3.30.70.890">
    <property type="entry name" value="GHMP kinase, C-terminal domain"/>
    <property type="match status" value="1"/>
</dbReference>
<dbReference type="HAMAP" id="MF_00246">
    <property type="entry name" value="Galactokinase"/>
    <property type="match status" value="1"/>
</dbReference>
<dbReference type="InterPro" id="IPR000705">
    <property type="entry name" value="Galactokinase"/>
</dbReference>
<dbReference type="InterPro" id="IPR022963">
    <property type="entry name" value="Galactokinase_bac"/>
</dbReference>
<dbReference type="InterPro" id="IPR019741">
    <property type="entry name" value="Galactokinase_CS"/>
</dbReference>
<dbReference type="InterPro" id="IPR019539">
    <property type="entry name" value="GalKase_N"/>
</dbReference>
<dbReference type="InterPro" id="IPR013750">
    <property type="entry name" value="GHMP_kinase_C_dom"/>
</dbReference>
<dbReference type="InterPro" id="IPR036554">
    <property type="entry name" value="GHMP_kinase_C_sf"/>
</dbReference>
<dbReference type="InterPro" id="IPR006204">
    <property type="entry name" value="GHMP_kinase_N_dom"/>
</dbReference>
<dbReference type="InterPro" id="IPR006203">
    <property type="entry name" value="GHMP_knse_ATP-bd_CS"/>
</dbReference>
<dbReference type="InterPro" id="IPR006206">
    <property type="entry name" value="Mevalonate/galactokinase"/>
</dbReference>
<dbReference type="InterPro" id="IPR020568">
    <property type="entry name" value="Ribosomal_Su5_D2-typ_SF"/>
</dbReference>
<dbReference type="InterPro" id="IPR014721">
    <property type="entry name" value="Ribsml_uS5_D2-typ_fold_subgr"/>
</dbReference>
<dbReference type="NCBIfam" id="TIGR00131">
    <property type="entry name" value="gal_kin"/>
    <property type="match status" value="1"/>
</dbReference>
<dbReference type="NCBIfam" id="NF003472">
    <property type="entry name" value="PRK05101.1"/>
    <property type="match status" value="1"/>
</dbReference>
<dbReference type="PANTHER" id="PTHR10457:SF7">
    <property type="entry name" value="GALACTOKINASE-RELATED"/>
    <property type="match status" value="1"/>
</dbReference>
<dbReference type="PANTHER" id="PTHR10457">
    <property type="entry name" value="MEVALONATE KINASE/GALACTOKINASE"/>
    <property type="match status" value="1"/>
</dbReference>
<dbReference type="Pfam" id="PF10509">
    <property type="entry name" value="GalKase_gal_bdg"/>
    <property type="match status" value="1"/>
</dbReference>
<dbReference type="Pfam" id="PF08544">
    <property type="entry name" value="GHMP_kinases_C"/>
    <property type="match status" value="1"/>
</dbReference>
<dbReference type="Pfam" id="PF00288">
    <property type="entry name" value="GHMP_kinases_N"/>
    <property type="match status" value="1"/>
</dbReference>
<dbReference type="PIRSF" id="PIRSF000530">
    <property type="entry name" value="Galactokinase"/>
    <property type="match status" value="1"/>
</dbReference>
<dbReference type="PRINTS" id="PR00473">
    <property type="entry name" value="GALCTOKINASE"/>
</dbReference>
<dbReference type="PRINTS" id="PR00959">
    <property type="entry name" value="MEVGALKINASE"/>
</dbReference>
<dbReference type="SUPFAM" id="SSF55060">
    <property type="entry name" value="GHMP Kinase, C-terminal domain"/>
    <property type="match status" value="1"/>
</dbReference>
<dbReference type="SUPFAM" id="SSF54211">
    <property type="entry name" value="Ribosomal protein S5 domain 2-like"/>
    <property type="match status" value="1"/>
</dbReference>
<dbReference type="PROSITE" id="PS00106">
    <property type="entry name" value="GALACTOKINASE"/>
    <property type="match status" value="1"/>
</dbReference>
<dbReference type="PROSITE" id="PS00627">
    <property type="entry name" value="GHMP_KINASES_ATP"/>
    <property type="match status" value="1"/>
</dbReference>
<organism>
    <name type="scientific">Haemophilus influenzae (strain PittEE)</name>
    <dbReference type="NCBI Taxonomy" id="374930"/>
    <lineage>
        <taxon>Bacteria</taxon>
        <taxon>Pseudomonadati</taxon>
        <taxon>Pseudomonadota</taxon>
        <taxon>Gammaproteobacteria</taxon>
        <taxon>Pasteurellales</taxon>
        <taxon>Pasteurellaceae</taxon>
        <taxon>Haemophilus</taxon>
    </lineage>
</organism>
<reference key="1">
    <citation type="journal article" date="2007" name="Genome Biol.">
        <title>Characterization and modeling of the Haemophilus influenzae core and supragenomes based on the complete genomic sequences of Rd and 12 clinical nontypeable strains.</title>
        <authorList>
            <person name="Hogg J.S."/>
            <person name="Hu F.Z."/>
            <person name="Janto B."/>
            <person name="Boissy R."/>
            <person name="Hayes J."/>
            <person name="Keefe R."/>
            <person name="Post J.C."/>
            <person name="Ehrlich G.D."/>
        </authorList>
    </citation>
    <scope>NUCLEOTIDE SEQUENCE [LARGE SCALE GENOMIC DNA]</scope>
    <source>
        <strain>PittEE</strain>
    </source>
</reference>
<accession>A5UDQ5</accession>
<gene>
    <name evidence="1" type="primary">galK</name>
    <name type="ordered locus">CGSHiEE_07965</name>
</gene>
<sequence>MTPIQNAQQIFNRQHKNLPEITVYAPGRVNIIGEHTDYNDGFVMPCAINFGTAISGAIRDDHIWNVYAADLDETDEFSLNVEIPKSEHKWANYVRGVVKFIQERYPHFQQGANLVISGNVPLSSGLSSSAALEVAVGKFCQQLGDLPLSHTDIALNGQKAENQFVGANCGNMDQLISALGQENHLLMIDCRSLETTPTPVPQDVAVIIVNSNVPHDLVTGEYNTRRQQCEEAAKFFGVKALRDVSVEQFQKREAELTALSPLAAKRARHVVTENQRVLDAVEALKNNDLTCLGKLMEASHDSMRDDFEITVPQIDYLVELVQLVIGKSGGARMTGGGFGGCIVALAPHDKVDAVRKIIADNYEKTTGLKETFYVCTASQGVRVI</sequence>
<evidence type="ECO:0000255" key="1">
    <source>
        <dbReference type="HAMAP-Rule" id="MF_00246"/>
    </source>
</evidence>
<name>GAL1_HAEIE</name>